<reference key="1">
    <citation type="journal article" date="2005" name="Nucleic Acids Res.">
        <title>Genomic blueprint of Hahella chejuensis, a marine microbe producing an algicidal agent.</title>
        <authorList>
            <person name="Jeong H."/>
            <person name="Yim J.H."/>
            <person name="Lee C."/>
            <person name="Choi S.-H."/>
            <person name="Park Y.K."/>
            <person name="Yoon S.H."/>
            <person name="Hur C.-G."/>
            <person name="Kang H.-Y."/>
            <person name="Kim D."/>
            <person name="Lee H.H."/>
            <person name="Park K.H."/>
            <person name="Park S.-H."/>
            <person name="Park H.-S."/>
            <person name="Lee H.K."/>
            <person name="Oh T.K."/>
            <person name="Kim J.F."/>
        </authorList>
    </citation>
    <scope>NUCLEOTIDE SEQUENCE [LARGE SCALE GENOMIC DNA]</scope>
    <source>
        <strain>KCTC 2396</strain>
    </source>
</reference>
<evidence type="ECO:0000255" key="1">
    <source>
        <dbReference type="HAMAP-Rule" id="MF_00405"/>
    </source>
</evidence>
<feature type="chain" id="PRO_0000267731" description="3-hydroxydecanoyl-[acyl-carrier-protein] dehydratase">
    <location>
        <begin position="1"/>
        <end position="183"/>
    </location>
</feature>
<feature type="active site" evidence="1">
    <location>
        <position position="77"/>
    </location>
</feature>
<dbReference type="EC" id="4.2.1.59" evidence="1"/>
<dbReference type="EC" id="5.3.3.14" evidence="1"/>
<dbReference type="EMBL" id="CP000155">
    <property type="protein sequence ID" value="ABC33049.1"/>
    <property type="molecule type" value="Genomic_DNA"/>
</dbReference>
<dbReference type="RefSeq" id="WP_011400101.1">
    <property type="nucleotide sequence ID" value="NC_007645.1"/>
</dbReference>
<dbReference type="SMR" id="Q2S8H5"/>
<dbReference type="STRING" id="349521.HCH_06403"/>
<dbReference type="KEGG" id="hch:HCH_06403"/>
<dbReference type="eggNOG" id="COG0764">
    <property type="taxonomic scope" value="Bacteria"/>
</dbReference>
<dbReference type="HOGENOM" id="CLU_097925_0_0_6"/>
<dbReference type="OrthoDB" id="9786735at2"/>
<dbReference type="UniPathway" id="UPA00094"/>
<dbReference type="Proteomes" id="UP000000238">
    <property type="component" value="Chromosome"/>
</dbReference>
<dbReference type="GO" id="GO:0005737">
    <property type="term" value="C:cytoplasm"/>
    <property type="evidence" value="ECO:0007669"/>
    <property type="project" value="UniProtKB-SubCell"/>
</dbReference>
<dbReference type="GO" id="GO:0019171">
    <property type="term" value="F:(3R)-hydroxyacyl-[acyl-carrier-protein] dehydratase activity"/>
    <property type="evidence" value="ECO:0007669"/>
    <property type="project" value="UniProtKB-UniRule"/>
</dbReference>
<dbReference type="GO" id="GO:0034017">
    <property type="term" value="F:trans-2-decenoyl-acyl-carrier-protein isomerase activity"/>
    <property type="evidence" value="ECO:0007669"/>
    <property type="project" value="UniProtKB-UniRule"/>
</dbReference>
<dbReference type="GO" id="GO:0006636">
    <property type="term" value="P:unsaturated fatty acid biosynthetic process"/>
    <property type="evidence" value="ECO:0007669"/>
    <property type="project" value="UniProtKB-UniRule"/>
</dbReference>
<dbReference type="CDD" id="cd01287">
    <property type="entry name" value="FabA"/>
    <property type="match status" value="1"/>
</dbReference>
<dbReference type="Gene3D" id="3.10.129.10">
    <property type="entry name" value="Hotdog Thioesterase"/>
    <property type="match status" value="1"/>
</dbReference>
<dbReference type="HAMAP" id="MF_00405">
    <property type="entry name" value="FabA"/>
    <property type="match status" value="1"/>
</dbReference>
<dbReference type="InterPro" id="IPR010083">
    <property type="entry name" value="FabA"/>
</dbReference>
<dbReference type="InterPro" id="IPR013114">
    <property type="entry name" value="FabA_FabZ"/>
</dbReference>
<dbReference type="InterPro" id="IPR029069">
    <property type="entry name" value="HotDog_dom_sf"/>
</dbReference>
<dbReference type="NCBIfam" id="TIGR01749">
    <property type="entry name" value="fabA"/>
    <property type="match status" value="1"/>
</dbReference>
<dbReference type="NCBIfam" id="NF003509">
    <property type="entry name" value="PRK05174.1"/>
    <property type="match status" value="1"/>
</dbReference>
<dbReference type="PANTHER" id="PTHR30272">
    <property type="entry name" value="3-HYDROXYACYL-[ACYL-CARRIER-PROTEIN] DEHYDRATASE"/>
    <property type="match status" value="1"/>
</dbReference>
<dbReference type="PANTHER" id="PTHR30272:SF8">
    <property type="entry name" value="3-HYDROXYDECANOYL-[ACYL-CARRIER-PROTEIN] DEHYDRATASE"/>
    <property type="match status" value="1"/>
</dbReference>
<dbReference type="Pfam" id="PF07977">
    <property type="entry name" value="FabA"/>
    <property type="match status" value="1"/>
</dbReference>
<dbReference type="SUPFAM" id="SSF54637">
    <property type="entry name" value="Thioesterase/thiol ester dehydrase-isomerase"/>
    <property type="match status" value="1"/>
</dbReference>
<protein>
    <recommendedName>
        <fullName evidence="1">3-hydroxydecanoyl-[acyl-carrier-protein] dehydratase</fullName>
        <ecNumber evidence="1">4.2.1.59</ecNumber>
    </recommendedName>
    <alternativeName>
        <fullName evidence="1">3-hydroxyacyl-[acyl-carrier-protein] dehydratase FabA</fullName>
    </alternativeName>
    <alternativeName>
        <fullName evidence="1">Beta-hydroxydecanoyl thioester dehydrase</fullName>
    </alternativeName>
    <alternativeName>
        <fullName evidence="1">Trans-2-decenoyl-[acyl-carrier-protein] isomerase</fullName>
        <ecNumber evidence="1">5.3.3.14</ecNumber>
    </alternativeName>
</protein>
<comment type="function">
    <text evidence="1">Necessary for the introduction of cis unsaturation into fatty acids. Catalyzes the dehydration of (3R)-3-hydroxydecanoyl-ACP to E-(2)-decenoyl-ACP and then its isomerization to Z-(3)-decenoyl-ACP. Can catalyze the dehydratase reaction for beta-hydroxyacyl-ACPs with saturated chain lengths up to 16:0, being most active on intermediate chain length.</text>
</comment>
<comment type="catalytic activity">
    <reaction evidence="1">
        <text>a (3R)-hydroxyacyl-[ACP] = a (2E)-enoyl-[ACP] + H2O</text>
        <dbReference type="Rhea" id="RHEA:13097"/>
        <dbReference type="Rhea" id="RHEA-COMP:9925"/>
        <dbReference type="Rhea" id="RHEA-COMP:9945"/>
        <dbReference type="ChEBI" id="CHEBI:15377"/>
        <dbReference type="ChEBI" id="CHEBI:78784"/>
        <dbReference type="ChEBI" id="CHEBI:78827"/>
        <dbReference type="EC" id="4.2.1.59"/>
    </reaction>
</comment>
<comment type="catalytic activity">
    <reaction evidence="1">
        <text>(3R)-hydroxydecanoyl-[ACP] = (2E)-decenoyl-[ACP] + H2O</text>
        <dbReference type="Rhea" id="RHEA:41860"/>
        <dbReference type="Rhea" id="RHEA-COMP:9638"/>
        <dbReference type="Rhea" id="RHEA-COMP:9639"/>
        <dbReference type="ChEBI" id="CHEBI:15377"/>
        <dbReference type="ChEBI" id="CHEBI:78466"/>
        <dbReference type="ChEBI" id="CHEBI:78467"/>
    </reaction>
</comment>
<comment type="catalytic activity">
    <reaction evidence="1">
        <text>(2E)-decenoyl-[ACP] = (3Z)-decenoyl-[ACP]</text>
        <dbReference type="Rhea" id="RHEA:23568"/>
        <dbReference type="Rhea" id="RHEA-COMP:9639"/>
        <dbReference type="Rhea" id="RHEA-COMP:9927"/>
        <dbReference type="ChEBI" id="CHEBI:78467"/>
        <dbReference type="ChEBI" id="CHEBI:78798"/>
        <dbReference type="EC" id="5.3.3.14"/>
    </reaction>
</comment>
<comment type="pathway">
    <text evidence="1">Lipid metabolism; fatty acid biosynthesis.</text>
</comment>
<comment type="subunit">
    <text evidence="1">Homodimer.</text>
</comment>
<comment type="subcellular location">
    <subcellularLocation>
        <location evidence="1">Cytoplasm</location>
    </subcellularLocation>
</comment>
<comment type="similarity">
    <text evidence="1">Belongs to the thioester dehydratase family. FabA subfamily.</text>
</comment>
<name>FABA_HAHCH</name>
<accession>Q2S8H5</accession>
<keyword id="KW-0963">Cytoplasm</keyword>
<keyword id="KW-0275">Fatty acid biosynthesis</keyword>
<keyword id="KW-0276">Fatty acid metabolism</keyword>
<keyword id="KW-0413">Isomerase</keyword>
<keyword id="KW-0444">Lipid biosynthesis</keyword>
<keyword id="KW-0443">Lipid metabolism</keyword>
<keyword id="KW-0456">Lyase</keyword>
<keyword id="KW-1185">Reference proteome</keyword>
<proteinExistence type="inferred from homology"/>
<sequence>MHAIAENHGVKASYTKEELQACGQGRLFGEGAAKLPVDQMLMVDRVSQISAEGGAYGHGIVRAQLDINPDLWFFKCHFVGDPVMPGCLGLDAMWQLVGFFLAWKGHKGLGRALGVGEVKFTGQVLPSAKSVEYVLDIKRVIARKLIMALADGTVYVDGKAIYTAKDLRVGLFDPAAMSGAEIK</sequence>
<gene>
    <name evidence="1" type="primary">fabA</name>
    <name type="ordered locus">HCH_06403</name>
</gene>
<organism>
    <name type="scientific">Hahella chejuensis (strain KCTC 2396)</name>
    <dbReference type="NCBI Taxonomy" id="349521"/>
    <lineage>
        <taxon>Bacteria</taxon>
        <taxon>Pseudomonadati</taxon>
        <taxon>Pseudomonadota</taxon>
        <taxon>Gammaproteobacteria</taxon>
        <taxon>Oceanospirillales</taxon>
        <taxon>Hahellaceae</taxon>
        <taxon>Hahella</taxon>
    </lineage>
</organism>